<organism>
    <name type="scientific">Nematostella vectensis</name>
    <name type="common">Starlet sea anemone</name>
    <dbReference type="NCBI Taxonomy" id="45351"/>
    <lineage>
        <taxon>Eukaryota</taxon>
        <taxon>Metazoa</taxon>
        <taxon>Cnidaria</taxon>
        <taxon>Anthozoa</taxon>
        <taxon>Hexacorallia</taxon>
        <taxon>Actiniaria</taxon>
        <taxon>Edwardsiidae</taxon>
        <taxon>Nematostella</taxon>
    </lineage>
</organism>
<feature type="chain" id="PRO_0000341241" description="Quinone oxidoreductase-like protein 2 homolog">
    <location>
        <begin position="1"/>
        <end position="365"/>
    </location>
</feature>
<sequence>MAAFQCPPERVLRPLARAISASQRRRQTYEKWPTGRKSYRAVMCNELGKPLVVEDKFSTENLGTSQVRVAVHSCGINFADILKCIGKYQEKPELPFVPGTEISGEVVEVGSKVTSLSKGDRVLGVCGQGGGMAEECVLPQTALWKIPSSLSFTQAAALAISYGTAYIGLKHKANLQPGQTVLVTAAAGALGLASVDLAANVFGAKVIGASRKEKLVIVQEIGATATIDYTRENIKDKVKELTDGHGANVIMEAVGGDVFKQCLKCIAWNGYIIPVGFASGEIPQIPANILLVKNCSAVGLYWGAHSKHDPQLLRESVDKTLEYFKNGKLKGPYISASFGLDKVNEAFQMILQRKSTGKVVINTKQ</sequence>
<proteinExistence type="inferred from homology"/>
<accession>A7RK30</accession>
<evidence type="ECO:0000305" key="1"/>
<keyword id="KW-0560">Oxidoreductase</keyword>
<keyword id="KW-1185">Reference proteome</keyword>
<name>QORL2_NEMVE</name>
<dbReference type="EC" id="1.-.-.-"/>
<dbReference type="EMBL" id="DS469515">
    <property type="protein sequence ID" value="EDO48177.1"/>
    <property type="molecule type" value="Genomic_DNA"/>
</dbReference>
<dbReference type="RefSeq" id="XP_001640240.1">
    <property type="nucleotide sequence ID" value="XM_001640190.1"/>
</dbReference>
<dbReference type="SMR" id="A7RK30"/>
<dbReference type="STRING" id="45351.A7RK30"/>
<dbReference type="EnsemblMetazoa" id="EDO48177">
    <property type="protein sequence ID" value="EDO48177"/>
    <property type="gene ID" value="NEMVEDRAFT_v1g238856"/>
</dbReference>
<dbReference type="KEGG" id="nve:5520320"/>
<dbReference type="eggNOG" id="KOG1198">
    <property type="taxonomic scope" value="Eukaryota"/>
</dbReference>
<dbReference type="HOGENOM" id="CLU_026673_3_1_1"/>
<dbReference type="InParanoid" id="A7RK30"/>
<dbReference type="OMA" id="CDIRGVF"/>
<dbReference type="OrthoDB" id="3509362at2759"/>
<dbReference type="PhylomeDB" id="A7RK30"/>
<dbReference type="Proteomes" id="UP000001593">
    <property type="component" value="Unassembled WGS sequence"/>
</dbReference>
<dbReference type="GO" id="GO:0016491">
    <property type="term" value="F:oxidoreductase activity"/>
    <property type="evidence" value="ECO:0000318"/>
    <property type="project" value="GO_Central"/>
</dbReference>
<dbReference type="CDD" id="cd08241">
    <property type="entry name" value="QOR1"/>
    <property type="match status" value="1"/>
</dbReference>
<dbReference type="Gene3D" id="3.90.180.10">
    <property type="entry name" value="Medium-chain alcohol dehydrogenases, catalytic domain"/>
    <property type="match status" value="1"/>
</dbReference>
<dbReference type="Gene3D" id="3.40.50.720">
    <property type="entry name" value="NAD(P)-binding Rossmann-like Domain"/>
    <property type="match status" value="1"/>
</dbReference>
<dbReference type="InterPro" id="IPR013149">
    <property type="entry name" value="ADH-like_C"/>
</dbReference>
<dbReference type="InterPro" id="IPR013154">
    <property type="entry name" value="ADH-like_N"/>
</dbReference>
<dbReference type="InterPro" id="IPR011032">
    <property type="entry name" value="GroES-like_sf"/>
</dbReference>
<dbReference type="InterPro" id="IPR036291">
    <property type="entry name" value="NAD(P)-bd_dom_sf"/>
</dbReference>
<dbReference type="InterPro" id="IPR020843">
    <property type="entry name" value="PKS_ER"/>
</dbReference>
<dbReference type="InterPro" id="IPR051397">
    <property type="entry name" value="Zn-ADH-like_protein"/>
</dbReference>
<dbReference type="PANTHER" id="PTHR43677:SF4">
    <property type="entry name" value="QUINONE OXIDOREDUCTASE-LIKE PROTEIN 2"/>
    <property type="match status" value="1"/>
</dbReference>
<dbReference type="PANTHER" id="PTHR43677">
    <property type="entry name" value="SHORT-CHAIN DEHYDROGENASE/REDUCTASE"/>
    <property type="match status" value="1"/>
</dbReference>
<dbReference type="Pfam" id="PF08240">
    <property type="entry name" value="ADH_N"/>
    <property type="match status" value="1"/>
</dbReference>
<dbReference type="Pfam" id="PF00107">
    <property type="entry name" value="ADH_zinc_N"/>
    <property type="match status" value="1"/>
</dbReference>
<dbReference type="SMART" id="SM00829">
    <property type="entry name" value="PKS_ER"/>
    <property type="match status" value="1"/>
</dbReference>
<dbReference type="SUPFAM" id="SSF50129">
    <property type="entry name" value="GroES-like"/>
    <property type="match status" value="1"/>
</dbReference>
<dbReference type="SUPFAM" id="SSF51735">
    <property type="entry name" value="NAD(P)-binding Rossmann-fold domains"/>
    <property type="match status" value="1"/>
</dbReference>
<gene>
    <name type="ORF">v1g238856</name>
</gene>
<comment type="similarity">
    <text evidence="1">Belongs to the zinc-containing alcohol dehydrogenase family. Quinone oxidoreductase subfamily.</text>
</comment>
<protein>
    <recommendedName>
        <fullName>Quinone oxidoreductase-like protein 2 homolog</fullName>
        <ecNumber>1.-.-.-</ecNumber>
    </recommendedName>
</protein>
<reference key="1">
    <citation type="journal article" date="2007" name="Science">
        <title>Sea anemone genome reveals ancestral eumetazoan gene repertoire and genomic organization.</title>
        <authorList>
            <person name="Putnam N.H."/>
            <person name="Srivastava M."/>
            <person name="Hellsten U."/>
            <person name="Dirks B."/>
            <person name="Chapman J."/>
            <person name="Salamov A."/>
            <person name="Terry A."/>
            <person name="Shapiro H."/>
            <person name="Lindquist E."/>
            <person name="Kapitonov V.V."/>
            <person name="Jurka J."/>
            <person name="Genikhovich G."/>
            <person name="Grigoriev I.V."/>
            <person name="Lucas S.M."/>
            <person name="Steele R.E."/>
            <person name="Finnerty J.R."/>
            <person name="Technau U."/>
            <person name="Martindale M.Q."/>
            <person name="Rokhsar D.S."/>
        </authorList>
    </citation>
    <scope>NUCLEOTIDE SEQUENCE [LARGE SCALE GENOMIC DNA]</scope>
    <source>
        <strain>CH2 X CH6</strain>
    </source>
</reference>